<accession>Q1LQD7</accession>
<comment type="function">
    <text evidence="1">Catalyzes oxygen-dependent 5-hydroxyuridine (ho5U) modification at position 34 in tRNAs.</text>
</comment>
<comment type="catalytic activity">
    <reaction evidence="1">
        <text>uridine(34) in tRNA + AH2 + O2 = 5-hydroxyuridine(34) in tRNA + A + H2O</text>
        <dbReference type="Rhea" id="RHEA:64224"/>
        <dbReference type="Rhea" id="RHEA-COMP:11727"/>
        <dbReference type="Rhea" id="RHEA-COMP:13381"/>
        <dbReference type="ChEBI" id="CHEBI:13193"/>
        <dbReference type="ChEBI" id="CHEBI:15377"/>
        <dbReference type="ChEBI" id="CHEBI:15379"/>
        <dbReference type="ChEBI" id="CHEBI:17499"/>
        <dbReference type="ChEBI" id="CHEBI:65315"/>
        <dbReference type="ChEBI" id="CHEBI:136877"/>
    </reaction>
</comment>
<comment type="similarity">
    <text evidence="1">Belongs to the TrhO family.</text>
</comment>
<keyword id="KW-0560">Oxidoreductase</keyword>
<keyword id="KW-1185">Reference proteome</keyword>
<keyword id="KW-0819">tRNA processing</keyword>
<name>TRHO_CUPMC</name>
<proteinExistence type="inferred from homology"/>
<sequence length="282" mass="31384">MQIVNISAYKFVTLEDIETLRPVMRERCDAAGLKGTILLAPEGINMFLAGTREQIDEFMAWLHADARFADIAPKESLSENQPFKRMLVRAKKEIITMKMPLIRPEAGRAPSVRPVDLKRWLDQGHDDDGRPVVMLDTRNAFEVAVGTFDKAVEYGIDKFSEFPPAVAENKAEFEGKTIVSFCTGGIRCEKAAIHMQEVGIDHVYQLEGGILKYFEEVGGSHYNGDCFVFDYRTALNPNLEPAGPVQCFACRAVVTPEEQQHPKYVVGKSCPHCVDTATQAAA</sequence>
<evidence type="ECO:0000255" key="1">
    <source>
        <dbReference type="HAMAP-Rule" id="MF_00469"/>
    </source>
</evidence>
<organism>
    <name type="scientific">Cupriavidus metallidurans (strain ATCC 43123 / DSM 2839 / NBRC 102507 / CH34)</name>
    <name type="common">Ralstonia metallidurans</name>
    <dbReference type="NCBI Taxonomy" id="266264"/>
    <lineage>
        <taxon>Bacteria</taxon>
        <taxon>Pseudomonadati</taxon>
        <taxon>Pseudomonadota</taxon>
        <taxon>Betaproteobacteria</taxon>
        <taxon>Burkholderiales</taxon>
        <taxon>Burkholderiaceae</taxon>
        <taxon>Cupriavidus</taxon>
    </lineage>
</organism>
<dbReference type="EC" id="1.14.-.-" evidence="1"/>
<dbReference type="EMBL" id="CP000352">
    <property type="protein sequence ID" value="ABF07639.1"/>
    <property type="molecule type" value="Genomic_DNA"/>
</dbReference>
<dbReference type="RefSeq" id="WP_011515594.1">
    <property type="nucleotide sequence ID" value="NC_007973.1"/>
</dbReference>
<dbReference type="SMR" id="Q1LQD7"/>
<dbReference type="STRING" id="266264.Rmet_0753"/>
<dbReference type="KEGG" id="rme:Rmet_0753"/>
<dbReference type="eggNOG" id="COG1054">
    <property type="taxonomic scope" value="Bacteria"/>
</dbReference>
<dbReference type="HOGENOM" id="CLU_038878_0_1_4"/>
<dbReference type="Proteomes" id="UP000002429">
    <property type="component" value="Chromosome"/>
</dbReference>
<dbReference type="GO" id="GO:0016705">
    <property type="term" value="F:oxidoreductase activity, acting on paired donors, with incorporation or reduction of molecular oxygen"/>
    <property type="evidence" value="ECO:0007669"/>
    <property type="project" value="UniProtKB-UniRule"/>
</dbReference>
<dbReference type="GO" id="GO:0006400">
    <property type="term" value="P:tRNA modification"/>
    <property type="evidence" value="ECO:0007669"/>
    <property type="project" value="UniProtKB-UniRule"/>
</dbReference>
<dbReference type="CDD" id="cd01518">
    <property type="entry name" value="RHOD_YceA"/>
    <property type="match status" value="1"/>
</dbReference>
<dbReference type="Gene3D" id="3.30.70.100">
    <property type="match status" value="1"/>
</dbReference>
<dbReference type="Gene3D" id="3.40.250.10">
    <property type="entry name" value="Rhodanese-like domain"/>
    <property type="match status" value="1"/>
</dbReference>
<dbReference type="HAMAP" id="MF_00469">
    <property type="entry name" value="TrhO"/>
    <property type="match status" value="1"/>
</dbReference>
<dbReference type="InterPro" id="IPR001763">
    <property type="entry name" value="Rhodanese-like_dom"/>
</dbReference>
<dbReference type="InterPro" id="IPR036873">
    <property type="entry name" value="Rhodanese-like_dom_sf"/>
</dbReference>
<dbReference type="InterPro" id="IPR020936">
    <property type="entry name" value="TrhO"/>
</dbReference>
<dbReference type="InterPro" id="IPR040503">
    <property type="entry name" value="TRHO_N"/>
</dbReference>
<dbReference type="NCBIfam" id="NF003703">
    <property type="entry name" value="PRK05320.1"/>
    <property type="match status" value="1"/>
</dbReference>
<dbReference type="PANTHER" id="PTHR43268:SF3">
    <property type="entry name" value="RHODANESE-LIKE DOMAIN-CONTAINING PROTEIN 7-RELATED"/>
    <property type="match status" value="1"/>
</dbReference>
<dbReference type="PANTHER" id="PTHR43268">
    <property type="entry name" value="THIOSULFATE SULFURTRANSFERASE/RHODANESE-LIKE DOMAIN-CONTAINING PROTEIN 2"/>
    <property type="match status" value="1"/>
</dbReference>
<dbReference type="Pfam" id="PF00581">
    <property type="entry name" value="Rhodanese"/>
    <property type="match status" value="1"/>
</dbReference>
<dbReference type="Pfam" id="PF17773">
    <property type="entry name" value="UPF0176_N"/>
    <property type="match status" value="1"/>
</dbReference>
<dbReference type="SMART" id="SM00450">
    <property type="entry name" value="RHOD"/>
    <property type="match status" value="1"/>
</dbReference>
<dbReference type="SUPFAM" id="SSF52821">
    <property type="entry name" value="Rhodanese/Cell cycle control phosphatase"/>
    <property type="match status" value="1"/>
</dbReference>
<dbReference type="PROSITE" id="PS50206">
    <property type="entry name" value="RHODANESE_3"/>
    <property type="match status" value="1"/>
</dbReference>
<gene>
    <name evidence="1" type="primary">trhO</name>
    <name type="ordered locus">Rmet_0753</name>
</gene>
<reference key="1">
    <citation type="journal article" date="2010" name="PLoS ONE">
        <title>The complete genome sequence of Cupriavidus metallidurans strain CH34, a master survivalist in harsh and anthropogenic environments.</title>
        <authorList>
            <person name="Janssen P.J."/>
            <person name="Van Houdt R."/>
            <person name="Moors H."/>
            <person name="Monsieurs P."/>
            <person name="Morin N."/>
            <person name="Michaux A."/>
            <person name="Benotmane M.A."/>
            <person name="Leys N."/>
            <person name="Vallaeys T."/>
            <person name="Lapidus A."/>
            <person name="Monchy S."/>
            <person name="Medigue C."/>
            <person name="Taghavi S."/>
            <person name="McCorkle S."/>
            <person name="Dunn J."/>
            <person name="van der Lelie D."/>
            <person name="Mergeay M."/>
        </authorList>
    </citation>
    <scope>NUCLEOTIDE SEQUENCE [LARGE SCALE GENOMIC DNA]</scope>
    <source>
        <strain>ATCC 43123 / DSM 2839 / NBRC 102507 / CH34</strain>
    </source>
</reference>
<feature type="chain" id="PRO_1000013762" description="tRNA uridine(34) hydroxylase">
    <location>
        <begin position="1"/>
        <end position="282"/>
    </location>
</feature>
<feature type="domain" description="Rhodanese" evidence="1">
    <location>
        <begin position="128"/>
        <end position="222"/>
    </location>
</feature>
<feature type="active site" description="Cysteine persulfide intermediate" evidence="1">
    <location>
        <position position="182"/>
    </location>
</feature>
<protein>
    <recommendedName>
        <fullName evidence="1">tRNA uridine(34) hydroxylase</fullName>
        <ecNumber evidence="1">1.14.-.-</ecNumber>
    </recommendedName>
    <alternativeName>
        <fullName evidence="1">tRNA hydroxylation protein O</fullName>
    </alternativeName>
</protein>